<organism>
    <name type="scientific">Geobacillus thermodenitrificans (strain NG80-2)</name>
    <dbReference type="NCBI Taxonomy" id="420246"/>
    <lineage>
        <taxon>Bacteria</taxon>
        <taxon>Bacillati</taxon>
        <taxon>Bacillota</taxon>
        <taxon>Bacilli</taxon>
        <taxon>Bacillales</taxon>
        <taxon>Anoxybacillaceae</taxon>
        <taxon>Geobacillus</taxon>
    </lineage>
</organism>
<accession>A4IPX4</accession>
<reference key="1">
    <citation type="journal article" date="2007" name="Proc. Natl. Acad. Sci. U.S.A.">
        <title>Genome and proteome of long-chain alkane degrading Geobacillus thermodenitrificans NG80-2 isolated from a deep-subsurface oil reservoir.</title>
        <authorList>
            <person name="Feng L."/>
            <person name="Wang W."/>
            <person name="Cheng J."/>
            <person name="Ren Y."/>
            <person name="Zhao G."/>
            <person name="Gao C."/>
            <person name="Tang Y."/>
            <person name="Liu X."/>
            <person name="Han W."/>
            <person name="Peng X."/>
            <person name="Liu R."/>
            <person name="Wang L."/>
        </authorList>
    </citation>
    <scope>NUCLEOTIDE SEQUENCE [LARGE SCALE GENOMIC DNA]</scope>
    <source>
        <strain>NG80-2</strain>
    </source>
</reference>
<proteinExistence type="inferred from homology"/>
<gene>
    <name evidence="1" type="primary">sspH2</name>
    <name type="ordered locus">GTNG_2026</name>
</gene>
<protein>
    <recommendedName>
        <fullName evidence="1">Small, acid-soluble spore protein H 2</fullName>
        <shortName evidence="1">SASP H 2</shortName>
    </recommendedName>
</protein>
<keyword id="KW-0749">Sporulation</keyword>
<dbReference type="EMBL" id="CP000557">
    <property type="protein sequence ID" value="ABO67378.1"/>
    <property type="status" value="ALT_INIT"/>
    <property type="molecule type" value="Genomic_DNA"/>
</dbReference>
<dbReference type="RefSeq" id="WP_008880497.1">
    <property type="nucleotide sequence ID" value="NC_009328.1"/>
</dbReference>
<dbReference type="SMR" id="A4IPX4"/>
<dbReference type="GeneID" id="87623845"/>
<dbReference type="KEGG" id="gtn:GTNG_2026"/>
<dbReference type="eggNOG" id="ENOG50333NS">
    <property type="taxonomic scope" value="Bacteria"/>
</dbReference>
<dbReference type="HOGENOM" id="CLU_191960_2_1_9"/>
<dbReference type="Proteomes" id="UP000001578">
    <property type="component" value="Chromosome"/>
</dbReference>
<dbReference type="GO" id="GO:0042601">
    <property type="term" value="C:endospore-forming forespore"/>
    <property type="evidence" value="ECO:0007669"/>
    <property type="project" value="InterPro"/>
</dbReference>
<dbReference type="GO" id="GO:0030436">
    <property type="term" value="P:asexual sporulation"/>
    <property type="evidence" value="ECO:0007669"/>
    <property type="project" value="UniProtKB-UniRule"/>
</dbReference>
<dbReference type="GO" id="GO:0030435">
    <property type="term" value="P:sporulation resulting in formation of a cellular spore"/>
    <property type="evidence" value="ECO:0007669"/>
    <property type="project" value="UniProtKB-KW"/>
</dbReference>
<dbReference type="HAMAP" id="MF_00667">
    <property type="entry name" value="SspH"/>
    <property type="match status" value="1"/>
</dbReference>
<dbReference type="InterPro" id="IPR012610">
    <property type="entry name" value="SASP_SspH"/>
</dbReference>
<dbReference type="NCBIfam" id="NF002867">
    <property type="entry name" value="PRK03174.1"/>
    <property type="match status" value="1"/>
</dbReference>
<dbReference type="NCBIfam" id="TIGR02861">
    <property type="entry name" value="SASP_H"/>
    <property type="match status" value="1"/>
</dbReference>
<dbReference type="Pfam" id="PF08141">
    <property type="entry name" value="SspH"/>
    <property type="match status" value="1"/>
</dbReference>
<evidence type="ECO:0000255" key="1">
    <source>
        <dbReference type="HAMAP-Rule" id="MF_00667"/>
    </source>
</evidence>
<evidence type="ECO:0000256" key="2">
    <source>
        <dbReference type="SAM" id="MobiDB-lite"/>
    </source>
</evidence>
<evidence type="ECO:0000305" key="3"/>
<name>SSPH2_GEOTN</name>
<comment type="subcellular location">
    <subcellularLocation>
        <location evidence="1">Spore core</location>
    </subcellularLocation>
</comment>
<comment type="induction">
    <text evidence="1">Expressed only in the forespore compartment of sporulating cells.</text>
</comment>
<comment type="similarity">
    <text evidence="1">Belongs to the SspH family.</text>
</comment>
<comment type="sequence caution" evidence="3">
    <conflict type="erroneous initiation">
        <sequence resource="EMBL-CDS" id="ABO67378"/>
    </conflict>
</comment>
<sequence length="60" mass="6671">MDVRRAQEIASSPVMANVTYNGQRIYIEHVDQQKGVATIHPLDNPSQKQSVPVASLEEHS</sequence>
<feature type="chain" id="PRO_0000329134" description="Small, acid-soluble spore protein H 2">
    <location>
        <begin position="1"/>
        <end position="60"/>
    </location>
</feature>
<feature type="region of interest" description="Disordered" evidence="2">
    <location>
        <begin position="38"/>
        <end position="60"/>
    </location>
</feature>